<dbReference type="EMBL" id="AL513382">
    <property type="protein sequence ID" value="CAD09532.1"/>
    <property type="molecule type" value="Genomic_DNA"/>
</dbReference>
<dbReference type="EMBL" id="AE014613">
    <property type="protein sequence ID" value="AAO71034.1"/>
    <property type="molecule type" value="Genomic_DNA"/>
</dbReference>
<dbReference type="RefSeq" id="NP_457961.1">
    <property type="nucleotide sequence ID" value="NC_003198.1"/>
</dbReference>
<dbReference type="RefSeq" id="WP_001293355.1">
    <property type="nucleotide sequence ID" value="NZ_WSUR01000010.1"/>
</dbReference>
<dbReference type="SMR" id="Q8Z2Z0"/>
<dbReference type="STRING" id="220341.gene:17587643"/>
<dbReference type="KEGG" id="stt:t3527"/>
<dbReference type="KEGG" id="sty:STY3779"/>
<dbReference type="PATRIC" id="fig|220341.7.peg.3857"/>
<dbReference type="eggNOG" id="COG1220">
    <property type="taxonomic scope" value="Bacteria"/>
</dbReference>
<dbReference type="HOGENOM" id="CLU_033123_0_0_6"/>
<dbReference type="OMA" id="YGMIKTD"/>
<dbReference type="OrthoDB" id="9804062at2"/>
<dbReference type="Proteomes" id="UP000000541">
    <property type="component" value="Chromosome"/>
</dbReference>
<dbReference type="Proteomes" id="UP000002670">
    <property type="component" value="Chromosome"/>
</dbReference>
<dbReference type="GO" id="GO:0009376">
    <property type="term" value="C:HslUV protease complex"/>
    <property type="evidence" value="ECO:0007669"/>
    <property type="project" value="UniProtKB-UniRule"/>
</dbReference>
<dbReference type="GO" id="GO:0005524">
    <property type="term" value="F:ATP binding"/>
    <property type="evidence" value="ECO:0007669"/>
    <property type="project" value="UniProtKB-UniRule"/>
</dbReference>
<dbReference type="GO" id="GO:0016887">
    <property type="term" value="F:ATP hydrolysis activity"/>
    <property type="evidence" value="ECO:0007669"/>
    <property type="project" value="InterPro"/>
</dbReference>
<dbReference type="GO" id="GO:0008233">
    <property type="term" value="F:peptidase activity"/>
    <property type="evidence" value="ECO:0007669"/>
    <property type="project" value="InterPro"/>
</dbReference>
<dbReference type="GO" id="GO:0036402">
    <property type="term" value="F:proteasome-activating activity"/>
    <property type="evidence" value="ECO:0007669"/>
    <property type="project" value="UniProtKB-UniRule"/>
</dbReference>
<dbReference type="GO" id="GO:0043335">
    <property type="term" value="P:protein unfolding"/>
    <property type="evidence" value="ECO:0007669"/>
    <property type="project" value="UniProtKB-UniRule"/>
</dbReference>
<dbReference type="GO" id="GO:0051603">
    <property type="term" value="P:proteolysis involved in protein catabolic process"/>
    <property type="evidence" value="ECO:0007669"/>
    <property type="project" value="TreeGrafter"/>
</dbReference>
<dbReference type="CDD" id="cd19498">
    <property type="entry name" value="RecA-like_HslU"/>
    <property type="match status" value="1"/>
</dbReference>
<dbReference type="FunFam" id="1.10.8.10:FF:000012">
    <property type="entry name" value="ATP-dependent protease ATPase subunit HslU"/>
    <property type="match status" value="1"/>
</dbReference>
<dbReference type="FunFam" id="1.10.8.10:FF:000028">
    <property type="entry name" value="ATP-dependent protease ATPase subunit HslU"/>
    <property type="match status" value="1"/>
</dbReference>
<dbReference type="FunFam" id="1.10.8.60:FF:000027">
    <property type="entry name" value="ATP-dependent protease ATPase subunit HslU"/>
    <property type="match status" value="1"/>
</dbReference>
<dbReference type="FunFam" id="3.40.50.300:FF:000213">
    <property type="entry name" value="ATP-dependent protease ATPase subunit HslU"/>
    <property type="match status" value="1"/>
</dbReference>
<dbReference type="FunFam" id="3.40.50.300:FF:000220">
    <property type="entry name" value="ATP-dependent protease ATPase subunit HslU"/>
    <property type="match status" value="1"/>
</dbReference>
<dbReference type="Gene3D" id="1.10.8.60">
    <property type="match status" value="1"/>
</dbReference>
<dbReference type="Gene3D" id="1.10.8.10">
    <property type="entry name" value="DNA helicase RuvA subunit, C-terminal domain"/>
    <property type="match status" value="2"/>
</dbReference>
<dbReference type="Gene3D" id="3.40.50.300">
    <property type="entry name" value="P-loop containing nucleotide triphosphate hydrolases"/>
    <property type="match status" value="1"/>
</dbReference>
<dbReference type="HAMAP" id="MF_00249">
    <property type="entry name" value="HslU"/>
    <property type="match status" value="1"/>
</dbReference>
<dbReference type="InterPro" id="IPR003593">
    <property type="entry name" value="AAA+_ATPase"/>
</dbReference>
<dbReference type="InterPro" id="IPR050052">
    <property type="entry name" value="ATP-dep_Clp_protease_ClpX"/>
</dbReference>
<dbReference type="InterPro" id="IPR003959">
    <property type="entry name" value="ATPase_AAA_core"/>
</dbReference>
<dbReference type="InterPro" id="IPR019489">
    <property type="entry name" value="Clp_ATPase_C"/>
</dbReference>
<dbReference type="InterPro" id="IPR004491">
    <property type="entry name" value="HslU"/>
</dbReference>
<dbReference type="InterPro" id="IPR027417">
    <property type="entry name" value="P-loop_NTPase"/>
</dbReference>
<dbReference type="NCBIfam" id="TIGR00390">
    <property type="entry name" value="hslU"/>
    <property type="match status" value="1"/>
</dbReference>
<dbReference type="NCBIfam" id="NF003544">
    <property type="entry name" value="PRK05201.1"/>
    <property type="match status" value="1"/>
</dbReference>
<dbReference type="PANTHER" id="PTHR48102">
    <property type="entry name" value="ATP-DEPENDENT CLP PROTEASE ATP-BINDING SUBUNIT CLPX-LIKE, MITOCHONDRIAL-RELATED"/>
    <property type="match status" value="1"/>
</dbReference>
<dbReference type="PANTHER" id="PTHR48102:SF3">
    <property type="entry name" value="ATP-DEPENDENT PROTEASE ATPASE SUBUNIT HSLU"/>
    <property type="match status" value="1"/>
</dbReference>
<dbReference type="Pfam" id="PF00004">
    <property type="entry name" value="AAA"/>
    <property type="match status" value="1"/>
</dbReference>
<dbReference type="Pfam" id="PF07724">
    <property type="entry name" value="AAA_2"/>
    <property type="match status" value="1"/>
</dbReference>
<dbReference type="SMART" id="SM00382">
    <property type="entry name" value="AAA"/>
    <property type="match status" value="1"/>
</dbReference>
<dbReference type="SMART" id="SM01086">
    <property type="entry name" value="ClpB_D2-small"/>
    <property type="match status" value="1"/>
</dbReference>
<dbReference type="SUPFAM" id="SSF52540">
    <property type="entry name" value="P-loop containing nucleoside triphosphate hydrolases"/>
    <property type="match status" value="1"/>
</dbReference>
<name>HSLU_SALTI</name>
<proteinExistence type="inferred from homology"/>
<keyword id="KW-0067">ATP-binding</keyword>
<keyword id="KW-0143">Chaperone</keyword>
<keyword id="KW-0963">Cytoplasm</keyword>
<keyword id="KW-0547">Nucleotide-binding</keyword>
<keyword id="KW-0346">Stress response</keyword>
<protein>
    <recommendedName>
        <fullName evidence="1">ATP-dependent protease ATPase subunit HslU</fullName>
    </recommendedName>
    <alternativeName>
        <fullName evidence="1">Heat shock protein HslU</fullName>
    </alternativeName>
    <alternativeName>
        <fullName evidence="1">Unfoldase HslU</fullName>
    </alternativeName>
</protein>
<organism>
    <name type="scientific">Salmonella typhi</name>
    <dbReference type="NCBI Taxonomy" id="90370"/>
    <lineage>
        <taxon>Bacteria</taxon>
        <taxon>Pseudomonadati</taxon>
        <taxon>Pseudomonadota</taxon>
        <taxon>Gammaproteobacteria</taxon>
        <taxon>Enterobacterales</taxon>
        <taxon>Enterobacteriaceae</taxon>
        <taxon>Salmonella</taxon>
    </lineage>
</organism>
<comment type="function">
    <text evidence="1">ATPase subunit of a proteasome-like degradation complex; this subunit has chaperone activity. The binding of ATP and its subsequent hydrolysis by HslU are essential for unfolding of protein substrates subsequently hydrolyzed by HslV. HslU recognizes the N-terminal part of its protein substrates and unfolds these before they are guided to HslV for hydrolysis.</text>
</comment>
<comment type="subunit">
    <text evidence="1">A double ring-shaped homohexamer of HslV is capped on each side by a ring-shaped HslU homohexamer. The assembly of the HslU/HslV complex is dependent on binding of ATP.</text>
</comment>
<comment type="subcellular location">
    <subcellularLocation>
        <location evidence="1">Cytoplasm</location>
    </subcellularLocation>
</comment>
<comment type="induction">
    <text evidence="1">By heat shock.</text>
</comment>
<comment type="similarity">
    <text evidence="1">Belongs to the ClpX chaperone family. HslU subfamily.</text>
</comment>
<gene>
    <name evidence="1" type="primary">hslU</name>
    <name type="ordered locus">STY3779</name>
    <name type="ordered locus">t3527</name>
</gene>
<feature type="chain" id="PRO_0000160542" description="ATP-dependent protease ATPase subunit HslU">
    <location>
        <begin position="1"/>
        <end position="443"/>
    </location>
</feature>
<feature type="binding site" evidence="1">
    <location>
        <position position="18"/>
    </location>
    <ligand>
        <name>ATP</name>
        <dbReference type="ChEBI" id="CHEBI:30616"/>
    </ligand>
</feature>
<feature type="binding site" evidence="1">
    <location>
        <begin position="60"/>
        <end position="65"/>
    </location>
    <ligand>
        <name>ATP</name>
        <dbReference type="ChEBI" id="CHEBI:30616"/>
    </ligand>
</feature>
<feature type="binding site" evidence="1">
    <location>
        <position position="256"/>
    </location>
    <ligand>
        <name>ATP</name>
        <dbReference type="ChEBI" id="CHEBI:30616"/>
    </ligand>
</feature>
<feature type="binding site" evidence="1">
    <location>
        <position position="321"/>
    </location>
    <ligand>
        <name>ATP</name>
        <dbReference type="ChEBI" id="CHEBI:30616"/>
    </ligand>
</feature>
<feature type="binding site" evidence="1">
    <location>
        <position position="393"/>
    </location>
    <ligand>
        <name>ATP</name>
        <dbReference type="ChEBI" id="CHEBI:30616"/>
    </ligand>
</feature>
<sequence>MSEMTPREIVSELNKHIIGQDNAKRSVAIALRNRWRRMQLDEELRHEVTPKNILMIGPTGVGKTEIARRLAKLANAPFIKVEATKFTEVGYVGKEVDSIIRDLTDAAVKMVRVQAIEKNRYRAEELAEERILDVLIPPAKNNWGQAEQQQEPSAARQTFRKKLREGQLDDKEIEINLAAAPMGVEIMAPPGMEEMTSQLQSIFQNLGGQKQKPRKLKIKDAMKLLVEEEAAKLVNPEELKQDAIDAVEQHGIVFIDEIDKICKRGETSGPDVSREGVQRDLLPLVEGCTVSTKHGMVKTDHILFIASGAFQVAKPSDLIPELQGRLPIRVELQALTTSDFERILTEPNASVTVQYKALMATEGVNIEFTDSGIKRIAEAAWQVNETTENIGARRLHTVLERLMEEISYNASDLHGQNITIDAEYVSKHLDALVADEDLSRFIL</sequence>
<reference key="1">
    <citation type="journal article" date="2001" name="Nature">
        <title>Complete genome sequence of a multiple drug resistant Salmonella enterica serovar Typhi CT18.</title>
        <authorList>
            <person name="Parkhill J."/>
            <person name="Dougan G."/>
            <person name="James K.D."/>
            <person name="Thomson N.R."/>
            <person name="Pickard D."/>
            <person name="Wain J."/>
            <person name="Churcher C.M."/>
            <person name="Mungall K.L."/>
            <person name="Bentley S.D."/>
            <person name="Holden M.T.G."/>
            <person name="Sebaihia M."/>
            <person name="Baker S."/>
            <person name="Basham D."/>
            <person name="Brooks K."/>
            <person name="Chillingworth T."/>
            <person name="Connerton P."/>
            <person name="Cronin A."/>
            <person name="Davis P."/>
            <person name="Davies R.M."/>
            <person name="Dowd L."/>
            <person name="White N."/>
            <person name="Farrar J."/>
            <person name="Feltwell T."/>
            <person name="Hamlin N."/>
            <person name="Haque A."/>
            <person name="Hien T.T."/>
            <person name="Holroyd S."/>
            <person name="Jagels K."/>
            <person name="Krogh A."/>
            <person name="Larsen T.S."/>
            <person name="Leather S."/>
            <person name="Moule S."/>
            <person name="O'Gaora P."/>
            <person name="Parry C."/>
            <person name="Quail M.A."/>
            <person name="Rutherford K.M."/>
            <person name="Simmonds M."/>
            <person name="Skelton J."/>
            <person name="Stevens K."/>
            <person name="Whitehead S."/>
            <person name="Barrell B.G."/>
        </authorList>
    </citation>
    <scope>NUCLEOTIDE SEQUENCE [LARGE SCALE GENOMIC DNA]</scope>
    <source>
        <strain>CT18</strain>
    </source>
</reference>
<reference key="2">
    <citation type="journal article" date="2003" name="J. Bacteriol.">
        <title>Comparative genomics of Salmonella enterica serovar Typhi strains Ty2 and CT18.</title>
        <authorList>
            <person name="Deng W."/>
            <person name="Liou S.-R."/>
            <person name="Plunkett G. III"/>
            <person name="Mayhew G.F."/>
            <person name="Rose D.J."/>
            <person name="Burland V."/>
            <person name="Kodoyianni V."/>
            <person name="Schwartz D.C."/>
            <person name="Blattner F.R."/>
        </authorList>
    </citation>
    <scope>NUCLEOTIDE SEQUENCE [LARGE SCALE GENOMIC DNA]</scope>
    <source>
        <strain>ATCC 700931 / Ty2</strain>
    </source>
</reference>
<accession>Q8Z2Z0</accession>
<evidence type="ECO:0000255" key="1">
    <source>
        <dbReference type="HAMAP-Rule" id="MF_00249"/>
    </source>
</evidence>